<gene>
    <name evidence="3" type="primary">MYL2</name>
</gene>
<proteinExistence type="evidence at protein level"/>
<accession>Q3SZE5</accession>
<reference evidence="9" key="1">
    <citation type="submission" date="2005-08" db="EMBL/GenBank/DDBJ databases">
        <authorList>
            <consortium name="NIH - Mammalian Gene Collection (MGC) project"/>
        </authorList>
    </citation>
    <scope>NUCLEOTIDE SEQUENCE [LARGE SCALE MRNA]</scope>
    <source>
        <strain evidence="9">Hereford</strain>
        <tissue evidence="9">Heart ventricle</tissue>
    </source>
</reference>
<reference key="2">
    <citation type="journal article" date="1985" name="Eur. J. Biochem.">
        <title>The widespread distribution of alpha-N-trimethylalanine as the N-terminal amino acid of light chains from vertebrate striated muscle myosins.</title>
        <authorList>
            <person name="Henry G.D."/>
            <person name="Trayer I.P."/>
            <person name="Brewer S."/>
            <person name="Levine B.A."/>
        </authorList>
    </citation>
    <scope>METHYLATION AT SER-2</scope>
</reference>
<feature type="initiator methionine" description="Removed" evidence="7">
    <location>
        <position position="1"/>
    </location>
</feature>
<feature type="chain" id="PRO_0000283744" description="Myosin regulatory light chain 2, ventricular/cardiac muscle isoform" evidence="3">
    <location>
        <begin position="2"/>
        <end position="166"/>
    </location>
</feature>
<feature type="domain" description="EF-hand 1" evidence="6">
    <location>
        <begin position="24"/>
        <end position="59"/>
    </location>
</feature>
<feature type="domain" description="EF-hand 2" evidence="6">
    <location>
        <begin position="94"/>
        <end position="129"/>
    </location>
</feature>
<feature type="domain" description="EF-hand 3" evidence="6">
    <location>
        <begin position="130"/>
        <end position="165"/>
    </location>
</feature>
<feature type="binding site" evidence="6">
    <location>
        <position position="37"/>
    </location>
    <ligand>
        <name>Ca(2+)</name>
        <dbReference type="ChEBI" id="CHEBI:29108"/>
    </ligand>
</feature>
<feature type="binding site" evidence="6">
    <location>
        <position position="39"/>
    </location>
    <ligand>
        <name>Ca(2+)</name>
        <dbReference type="ChEBI" id="CHEBI:29108"/>
    </ligand>
</feature>
<feature type="binding site" evidence="6">
    <location>
        <position position="41"/>
    </location>
    <ligand>
        <name>Ca(2+)</name>
        <dbReference type="ChEBI" id="CHEBI:29108"/>
    </ligand>
</feature>
<feature type="binding site" evidence="6">
    <location>
        <position position="48"/>
    </location>
    <ligand>
        <name>Ca(2+)</name>
        <dbReference type="ChEBI" id="CHEBI:29108"/>
    </ligand>
</feature>
<feature type="modified residue" description="N,N,N-trimethylserine" evidence="8">
    <location>
        <position position="2"/>
    </location>
</feature>
<feature type="modified residue" description="Deamidated asparagine" evidence="3">
    <location>
        <position position="14"/>
    </location>
</feature>
<feature type="modified residue" description="Phosphoserine" evidence="4">
    <location>
        <position position="19"/>
    </location>
</feature>
<feature type="modified residue" description="Phosphothreonine" evidence="2">
    <location>
        <position position="52"/>
    </location>
</feature>
<organism>
    <name type="scientific">Bos taurus</name>
    <name type="common">Bovine</name>
    <dbReference type="NCBI Taxonomy" id="9913"/>
    <lineage>
        <taxon>Eukaryota</taxon>
        <taxon>Metazoa</taxon>
        <taxon>Chordata</taxon>
        <taxon>Craniata</taxon>
        <taxon>Vertebrata</taxon>
        <taxon>Euteleostomi</taxon>
        <taxon>Mammalia</taxon>
        <taxon>Eutheria</taxon>
        <taxon>Laurasiatheria</taxon>
        <taxon>Artiodactyla</taxon>
        <taxon>Ruminantia</taxon>
        <taxon>Pecora</taxon>
        <taxon>Bovidae</taxon>
        <taxon>Bovinae</taxon>
        <taxon>Bos</taxon>
    </lineage>
</organism>
<keyword id="KW-0106">Calcium</keyword>
<keyword id="KW-0963">Cytoplasm</keyword>
<keyword id="KW-0479">Metal-binding</keyword>
<keyword id="KW-0488">Methylation</keyword>
<keyword id="KW-0505">Motor protein</keyword>
<keyword id="KW-0514">Muscle protein</keyword>
<keyword id="KW-0518">Myosin</keyword>
<keyword id="KW-0597">Phosphoprotein</keyword>
<keyword id="KW-1185">Reference proteome</keyword>
<keyword id="KW-0677">Repeat</keyword>
<comment type="function">
    <text evidence="2 4">Contractile protein that plays a role in heart development and function (By similarity). Following phosphorylation, plays a role in cross-bridge cycling kinetics and cardiac muscle contraction by increasing myosin lever arm stiffness and promoting myosin head diffusion; as a consequence of the increase in maximum contraction force and calcium sensitivity of contraction force. These events altogether slow down myosin kinetics and prolong duty cycle resulting in accumulated myosins being cooperatively recruited to actin binding sites to sustain thin filament activation as a means to fine-tune myofilament calcium sensitivity to force (By similarity). During cardiogenesis plays an early role in cardiac contractility by promoting cardiac myofibril assembly (By similarity).</text>
</comment>
<comment type="subunit">
    <text evidence="1 3">Myosin is a hexamer of 2 heavy chains and 4 light chains (By similarity). Interacts with MYOC (By similarity).</text>
</comment>
<comment type="subcellular location">
    <subcellularLocation>
        <location evidence="2">Cytoplasm</location>
        <location evidence="2">Myofibril</location>
        <location evidence="2">Sarcomere</location>
        <location evidence="2">A band</location>
    </subcellularLocation>
</comment>
<comment type="PTM">
    <text evidence="4">N-terminus is methylated by METTL11A/NTM1.</text>
</comment>
<comment type="PTM">
    <text evidence="2 4">Phosphorylated by MYLK3 and MYLK2; promotes cardiac muscle contraction and function (By similarity). Dephosphorylated by PPP1CB complexed to PPP1R12B (By similarity). The phosphorylated form in adult is expressed as gradients across the heart from endocardium (low phosphorylation) to epicardium (high phosphorylation); regulates cardiac torsion and workload distribution (By similarity).</text>
</comment>
<comment type="miscellaneous">
    <text evidence="7">This chain binds calcium.</text>
</comment>
<sequence>MSPKKAKKRAEGANYNVFSMFEQTQIQEFKEAFTIMDQNRDGFIDKNDLRDTFAALGRVNVKNEEIDEMLKEAPGPINFTVFLQMFGEKLKGADPEETILNAFKVFDPEGKGVLKADYIKEMLTTQAERFSKEEIDQMFAAFPPDVTGNLDYKNLVHIITHGEEKD</sequence>
<protein>
    <recommendedName>
        <fullName evidence="7">Myosin regulatory light chain 2, ventricular/cardiac muscle isoform</fullName>
        <shortName evidence="2">MLC-2</shortName>
        <shortName>MLC-2v</shortName>
    </recommendedName>
    <alternativeName>
        <fullName evidence="5">Myosin light chain 2, slow skeletal/ventricular muscle isoform</fullName>
        <shortName evidence="5">MLC-2s/v</shortName>
    </alternativeName>
</protein>
<name>MLRV_BOVIN</name>
<evidence type="ECO:0000250" key="1"/>
<evidence type="ECO:0000250" key="2">
    <source>
        <dbReference type="UniProtKB" id="P08733"/>
    </source>
</evidence>
<evidence type="ECO:0000250" key="3">
    <source>
        <dbReference type="UniProtKB" id="P10916"/>
    </source>
</evidence>
<evidence type="ECO:0000250" key="4">
    <source>
        <dbReference type="UniProtKB" id="P51667"/>
    </source>
</evidence>
<evidence type="ECO:0000250" key="5">
    <source>
        <dbReference type="UniProtKB" id="Q7M2V4"/>
    </source>
</evidence>
<evidence type="ECO:0000255" key="6">
    <source>
        <dbReference type="PROSITE-ProRule" id="PRU00448"/>
    </source>
</evidence>
<evidence type="ECO:0000305" key="7"/>
<evidence type="ECO:0000305" key="8">
    <source>
    </source>
</evidence>
<evidence type="ECO:0000312" key="9">
    <source>
        <dbReference type="EMBL" id="AAI02915.1"/>
    </source>
</evidence>
<dbReference type="EMBL" id="BC102914">
    <property type="protein sequence ID" value="AAI02915.1"/>
    <property type="molecule type" value="mRNA"/>
</dbReference>
<dbReference type="RefSeq" id="NP_001030197.1">
    <property type="nucleotide sequence ID" value="NM_001035025.2"/>
</dbReference>
<dbReference type="SMR" id="Q3SZE5"/>
<dbReference type="FunCoup" id="Q3SZE5">
    <property type="interactions" value="382"/>
</dbReference>
<dbReference type="STRING" id="9913.ENSBTAP00000066211"/>
<dbReference type="iPTMnet" id="Q3SZE5"/>
<dbReference type="PaxDb" id="9913-ENSBTAP00000024444"/>
<dbReference type="GeneID" id="505519"/>
<dbReference type="KEGG" id="bta:505519"/>
<dbReference type="CTD" id="4633"/>
<dbReference type="eggNOG" id="KOG0031">
    <property type="taxonomic scope" value="Eukaryota"/>
</dbReference>
<dbReference type="InParanoid" id="Q3SZE5"/>
<dbReference type="OrthoDB" id="429467at2759"/>
<dbReference type="Proteomes" id="UP000009136">
    <property type="component" value="Unplaced"/>
</dbReference>
<dbReference type="GO" id="GO:0031672">
    <property type="term" value="C:A band"/>
    <property type="evidence" value="ECO:0007669"/>
    <property type="project" value="UniProtKB-SubCell"/>
</dbReference>
<dbReference type="GO" id="GO:0005737">
    <property type="term" value="C:cytoplasm"/>
    <property type="evidence" value="ECO:0000318"/>
    <property type="project" value="GO_Central"/>
</dbReference>
<dbReference type="GO" id="GO:0030016">
    <property type="term" value="C:myofibril"/>
    <property type="evidence" value="ECO:0000318"/>
    <property type="project" value="GO_Central"/>
</dbReference>
<dbReference type="GO" id="GO:0016459">
    <property type="term" value="C:myosin complex"/>
    <property type="evidence" value="ECO:0007669"/>
    <property type="project" value="UniProtKB-KW"/>
</dbReference>
<dbReference type="GO" id="GO:0005509">
    <property type="term" value="F:calcium ion binding"/>
    <property type="evidence" value="ECO:0000318"/>
    <property type="project" value="GO_Central"/>
</dbReference>
<dbReference type="GO" id="GO:0060048">
    <property type="term" value="P:cardiac muscle contraction"/>
    <property type="evidence" value="ECO:0000318"/>
    <property type="project" value="GO_Central"/>
</dbReference>
<dbReference type="GO" id="GO:0060047">
    <property type="term" value="P:heart contraction"/>
    <property type="evidence" value="ECO:0000250"/>
    <property type="project" value="UniProtKB"/>
</dbReference>
<dbReference type="GO" id="GO:0007507">
    <property type="term" value="P:heart development"/>
    <property type="evidence" value="ECO:0000250"/>
    <property type="project" value="UniProtKB"/>
</dbReference>
<dbReference type="GO" id="GO:0042694">
    <property type="term" value="P:muscle cell fate specification"/>
    <property type="evidence" value="ECO:0000318"/>
    <property type="project" value="GO_Central"/>
</dbReference>
<dbReference type="GO" id="GO:0098735">
    <property type="term" value="P:positive regulation of the force of heart contraction"/>
    <property type="evidence" value="ECO:0000250"/>
    <property type="project" value="UniProtKB"/>
</dbReference>
<dbReference type="GO" id="GO:0002026">
    <property type="term" value="P:regulation of the force of heart contraction"/>
    <property type="evidence" value="ECO:0000250"/>
    <property type="project" value="UniProtKB"/>
</dbReference>
<dbReference type="FunFam" id="1.10.238.10:FF:000010">
    <property type="entry name" value="Myosin regulatory light chain 2, atrial isoform"/>
    <property type="match status" value="1"/>
</dbReference>
<dbReference type="FunFam" id="1.10.238.10:FF:000007">
    <property type="entry name" value="Putative myosin regulatory light chain sqh"/>
    <property type="match status" value="1"/>
</dbReference>
<dbReference type="Gene3D" id="1.10.238.10">
    <property type="entry name" value="EF-hand"/>
    <property type="match status" value="2"/>
</dbReference>
<dbReference type="InterPro" id="IPR011992">
    <property type="entry name" value="EF-hand-dom_pair"/>
</dbReference>
<dbReference type="InterPro" id="IPR018247">
    <property type="entry name" value="EF_Hand_1_Ca_BS"/>
</dbReference>
<dbReference type="InterPro" id="IPR002048">
    <property type="entry name" value="EF_hand_dom"/>
</dbReference>
<dbReference type="InterPro" id="IPR050403">
    <property type="entry name" value="Myosin_RLC"/>
</dbReference>
<dbReference type="PANTHER" id="PTHR23049">
    <property type="entry name" value="MYOSIN REGULATORY LIGHT CHAIN 2"/>
    <property type="match status" value="1"/>
</dbReference>
<dbReference type="Pfam" id="PF13499">
    <property type="entry name" value="EF-hand_7"/>
    <property type="match status" value="1"/>
</dbReference>
<dbReference type="SMART" id="SM00054">
    <property type="entry name" value="EFh"/>
    <property type="match status" value="3"/>
</dbReference>
<dbReference type="SUPFAM" id="SSF47473">
    <property type="entry name" value="EF-hand"/>
    <property type="match status" value="1"/>
</dbReference>
<dbReference type="PROSITE" id="PS00018">
    <property type="entry name" value="EF_HAND_1"/>
    <property type="match status" value="1"/>
</dbReference>
<dbReference type="PROSITE" id="PS50222">
    <property type="entry name" value="EF_HAND_2"/>
    <property type="match status" value="3"/>
</dbReference>